<evidence type="ECO:0000255" key="1">
    <source>
        <dbReference type="HAMAP-Rule" id="MF_00248"/>
    </source>
</evidence>
<accession>A8LPA8</accession>
<protein>
    <recommendedName>
        <fullName evidence="1">ATP-dependent protease subunit HslV</fullName>
        <ecNumber evidence="1">3.4.25.2</ecNumber>
    </recommendedName>
</protein>
<gene>
    <name evidence="1" type="primary">hslV</name>
    <name type="ordered locus">Dshi_3440</name>
</gene>
<name>HSLV_DINSH</name>
<keyword id="KW-0021">Allosteric enzyme</keyword>
<keyword id="KW-0963">Cytoplasm</keyword>
<keyword id="KW-0378">Hydrolase</keyword>
<keyword id="KW-0479">Metal-binding</keyword>
<keyword id="KW-0645">Protease</keyword>
<keyword id="KW-1185">Reference proteome</keyword>
<keyword id="KW-0915">Sodium</keyword>
<keyword id="KW-0888">Threonine protease</keyword>
<reference key="1">
    <citation type="journal article" date="2010" name="ISME J.">
        <title>The complete genome sequence of the algal symbiont Dinoroseobacter shibae: a hitchhiker's guide to life in the sea.</title>
        <authorList>
            <person name="Wagner-Dobler I."/>
            <person name="Ballhausen B."/>
            <person name="Berger M."/>
            <person name="Brinkhoff T."/>
            <person name="Buchholz I."/>
            <person name="Bunk B."/>
            <person name="Cypionka H."/>
            <person name="Daniel R."/>
            <person name="Drepper T."/>
            <person name="Gerdts G."/>
            <person name="Hahnke S."/>
            <person name="Han C."/>
            <person name="Jahn D."/>
            <person name="Kalhoefer D."/>
            <person name="Kiss H."/>
            <person name="Klenk H.P."/>
            <person name="Kyrpides N."/>
            <person name="Liebl W."/>
            <person name="Liesegang H."/>
            <person name="Meincke L."/>
            <person name="Pati A."/>
            <person name="Petersen J."/>
            <person name="Piekarski T."/>
            <person name="Pommerenke C."/>
            <person name="Pradella S."/>
            <person name="Pukall R."/>
            <person name="Rabus R."/>
            <person name="Stackebrandt E."/>
            <person name="Thole S."/>
            <person name="Thompson L."/>
            <person name="Tielen P."/>
            <person name="Tomasch J."/>
            <person name="von Jan M."/>
            <person name="Wanphrut N."/>
            <person name="Wichels A."/>
            <person name="Zech H."/>
            <person name="Simon M."/>
        </authorList>
    </citation>
    <scope>NUCLEOTIDE SEQUENCE [LARGE SCALE GENOMIC DNA]</scope>
    <source>
        <strain>DSM 16493 / NCIMB 14021 / DFL 12</strain>
    </source>
</reference>
<proteinExistence type="inferred from homology"/>
<dbReference type="EC" id="3.4.25.2" evidence="1"/>
<dbReference type="EMBL" id="CP000830">
    <property type="protein sequence ID" value="ABV95173.1"/>
    <property type="molecule type" value="Genomic_DNA"/>
</dbReference>
<dbReference type="RefSeq" id="WP_012180097.1">
    <property type="nucleotide sequence ID" value="NC_009952.1"/>
</dbReference>
<dbReference type="SMR" id="A8LPA8"/>
<dbReference type="STRING" id="398580.Dshi_3440"/>
<dbReference type="MEROPS" id="T01.006"/>
<dbReference type="KEGG" id="dsh:Dshi_3440"/>
<dbReference type="eggNOG" id="COG5405">
    <property type="taxonomic scope" value="Bacteria"/>
</dbReference>
<dbReference type="HOGENOM" id="CLU_093872_1_0_5"/>
<dbReference type="OrthoDB" id="9804884at2"/>
<dbReference type="Proteomes" id="UP000006833">
    <property type="component" value="Chromosome"/>
</dbReference>
<dbReference type="GO" id="GO:0009376">
    <property type="term" value="C:HslUV protease complex"/>
    <property type="evidence" value="ECO:0007669"/>
    <property type="project" value="UniProtKB-UniRule"/>
</dbReference>
<dbReference type="GO" id="GO:0005839">
    <property type="term" value="C:proteasome core complex"/>
    <property type="evidence" value="ECO:0007669"/>
    <property type="project" value="InterPro"/>
</dbReference>
<dbReference type="GO" id="GO:0046872">
    <property type="term" value="F:metal ion binding"/>
    <property type="evidence" value="ECO:0007669"/>
    <property type="project" value="UniProtKB-KW"/>
</dbReference>
<dbReference type="GO" id="GO:0004298">
    <property type="term" value="F:threonine-type endopeptidase activity"/>
    <property type="evidence" value="ECO:0007669"/>
    <property type="project" value="UniProtKB-KW"/>
</dbReference>
<dbReference type="GO" id="GO:0051603">
    <property type="term" value="P:proteolysis involved in protein catabolic process"/>
    <property type="evidence" value="ECO:0007669"/>
    <property type="project" value="InterPro"/>
</dbReference>
<dbReference type="CDD" id="cd01913">
    <property type="entry name" value="protease_HslV"/>
    <property type="match status" value="1"/>
</dbReference>
<dbReference type="Gene3D" id="3.60.20.10">
    <property type="entry name" value="Glutamine Phosphoribosylpyrophosphate, subunit 1, domain 1"/>
    <property type="match status" value="1"/>
</dbReference>
<dbReference type="HAMAP" id="MF_00248">
    <property type="entry name" value="HslV"/>
    <property type="match status" value="1"/>
</dbReference>
<dbReference type="InterPro" id="IPR022281">
    <property type="entry name" value="ATP-dep_Prtase_HsIV_su"/>
</dbReference>
<dbReference type="InterPro" id="IPR029055">
    <property type="entry name" value="Ntn_hydrolases_N"/>
</dbReference>
<dbReference type="InterPro" id="IPR001353">
    <property type="entry name" value="Proteasome_sua/b"/>
</dbReference>
<dbReference type="InterPro" id="IPR023333">
    <property type="entry name" value="Proteasome_suB-type"/>
</dbReference>
<dbReference type="NCBIfam" id="TIGR03692">
    <property type="entry name" value="ATP_dep_HslV"/>
    <property type="match status" value="1"/>
</dbReference>
<dbReference type="NCBIfam" id="NF003964">
    <property type="entry name" value="PRK05456.1"/>
    <property type="match status" value="1"/>
</dbReference>
<dbReference type="PANTHER" id="PTHR32194:SF7">
    <property type="entry name" value="ATP-DEPENDENT PROTEASE SUBUNIT HSLV"/>
    <property type="match status" value="1"/>
</dbReference>
<dbReference type="PANTHER" id="PTHR32194">
    <property type="entry name" value="METALLOPROTEASE TLDD"/>
    <property type="match status" value="1"/>
</dbReference>
<dbReference type="Pfam" id="PF00227">
    <property type="entry name" value="Proteasome"/>
    <property type="match status" value="1"/>
</dbReference>
<dbReference type="PIRSF" id="PIRSF039093">
    <property type="entry name" value="HslV"/>
    <property type="match status" value="1"/>
</dbReference>
<dbReference type="SUPFAM" id="SSF56235">
    <property type="entry name" value="N-terminal nucleophile aminohydrolases (Ntn hydrolases)"/>
    <property type="match status" value="1"/>
</dbReference>
<dbReference type="PROSITE" id="PS51476">
    <property type="entry name" value="PROTEASOME_BETA_2"/>
    <property type="match status" value="1"/>
</dbReference>
<organism>
    <name type="scientific">Dinoroseobacter shibae (strain DSM 16493 / NCIMB 14021 / DFL 12)</name>
    <dbReference type="NCBI Taxonomy" id="398580"/>
    <lineage>
        <taxon>Bacteria</taxon>
        <taxon>Pseudomonadati</taxon>
        <taxon>Pseudomonadota</taxon>
        <taxon>Alphaproteobacteria</taxon>
        <taxon>Rhodobacterales</taxon>
        <taxon>Roseobacteraceae</taxon>
        <taxon>Dinoroseobacter</taxon>
    </lineage>
</organism>
<sequence length="185" mass="19377">MTETSFPGWHGTTIIGVKKNGKVVVAGDGQVSLGQTVIKGTARKVRRLTPGGHDVVAGFAGSTADAFTLLERLEAKLEATPGQLQRAAVELAKDWRTDKYLQKLEAMLIVTDGSLLLVITGAGDVLEPEHDIAAIGSGGNFALAAARGLMEADFDAETIARKAMQIAADICVYTNGNLTVEAIDA</sequence>
<comment type="function">
    <text evidence="1">Protease subunit of a proteasome-like degradation complex believed to be a general protein degrading machinery.</text>
</comment>
<comment type="catalytic activity">
    <reaction evidence="1">
        <text>ATP-dependent cleavage of peptide bonds with broad specificity.</text>
        <dbReference type="EC" id="3.4.25.2"/>
    </reaction>
</comment>
<comment type="activity regulation">
    <text evidence="1">Allosterically activated by HslU binding.</text>
</comment>
<comment type="subunit">
    <text evidence="1">A double ring-shaped homohexamer of HslV is capped on each side by a ring-shaped HslU homohexamer. The assembly of the HslU/HslV complex is dependent on binding of ATP.</text>
</comment>
<comment type="subcellular location">
    <subcellularLocation>
        <location evidence="1">Cytoplasm</location>
    </subcellularLocation>
</comment>
<comment type="similarity">
    <text evidence="1">Belongs to the peptidase T1B family. HslV subfamily.</text>
</comment>
<feature type="chain" id="PRO_0000336774" description="ATP-dependent protease subunit HslV">
    <location>
        <begin position="1"/>
        <end position="185"/>
    </location>
</feature>
<feature type="active site" evidence="1">
    <location>
        <position position="12"/>
    </location>
</feature>
<feature type="binding site" evidence="1">
    <location>
        <position position="168"/>
    </location>
    <ligand>
        <name>Na(+)</name>
        <dbReference type="ChEBI" id="CHEBI:29101"/>
    </ligand>
</feature>
<feature type="binding site" evidence="1">
    <location>
        <position position="171"/>
    </location>
    <ligand>
        <name>Na(+)</name>
        <dbReference type="ChEBI" id="CHEBI:29101"/>
    </ligand>
</feature>
<feature type="binding site" evidence="1">
    <location>
        <position position="174"/>
    </location>
    <ligand>
        <name>Na(+)</name>
        <dbReference type="ChEBI" id="CHEBI:29101"/>
    </ligand>
</feature>